<feature type="chain" id="PRO_1000141600" description="Large ribosomal subunit protein uL2">
    <location>
        <begin position="1"/>
        <end position="274"/>
    </location>
</feature>
<feature type="region of interest" description="Disordered" evidence="2">
    <location>
        <begin position="28"/>
        <end position="55"/>
    </location>
</feature>
<feature type="region of interest" description="Disordered" evidence="2">
    <location>
        <begin position="224"/>
        <end position="274"/>
    </location>
</feature>
<dbReference type="EMBL" id="CP000949">
    <property type="protein sequence ID" value="ACA75222.1"/>
    <property type="molecule type" value="Genomic_DNA"/>
</dbReference>
<dbReference type="SMR" id="B1JDW1"/>
<dbReference type="STRING" id="390235.PputW619_4746"/>
<dbReference type="KEGG" id="ppw:PputW619_4746"/>
<dbReference type="eggNOG" id="COG0090">
    <property type="taxonomic scope" value="Bacteria"/>
</dbReference>
<dbReference type="HOGENOM" id="CLU_036235_2_1_6"/>
<dbReference type="OrthoDB" id="9778722at2"/>
<dbReference type="GO" id="GO:0015934">
    <property type="term" value="C:large ribosomal subunit"/>
    <property type="evidence" value="ECO:0007669"/>
    <property type="project" value="InterPro"/>
</dbReference>
<dbReference type="GO" id="GO:0019843">
    <property type="term" value="F:rRNA binding"/>
    <property type="evidence" value="ECO:0007669"/>
    <property type="project" value="UniProtKB-UniRule"/>
</dbReference>
<dbReference type="GO" id="GO:0003735">
    <property type="term" value="F:structural constituent of ribosome"/>
    <property type="evidence" value="ECO:0007669"/>
    <property type="project" value="InterPro"/>
</dbReference>
<dbReference type="GO" id="GO:0016740">
    <property type="term" value="F:transferase activity"/>
    <property type="evidence" value="ECO:0007669"/>
    <property type="project" value="InterPro"/>
</dbReference>
<dbReference type="GO" id="GO:0002181">
    <property type="term" value="P:cytoplasmic translation"/>
    <property type="evidence" value="ECO:0007669"/>
    <property type="project" value="TreeGrafter"/>
</dbReference>
<dbReference type="FunFam" id="2.30.30.30:FF:000001">
    <property type="entry name" value="50S ribosomal protein L2"/>
    <property type="match status" value="1"/>
</dbReference>
<dbReference type="FunFam" id="2.40.50.140:FF:000003">
    <property type="entry name" value="50S ribosomal protein L2"/>
    <property type="match status" value="1"/>
</dbReference>
<dbReference type="FunFam" id="4.10.950.10:FF:000001">
    <property type="entry name" value="50S ribosomal protein L2"/>
    <property type="match status" value="1"/>
</dbReference>
<dbReference type="Gene3D" id="2.30.30.30">
    <property type="match status" value="1"/>
</dbReference>
<dbReference type="Gene3D" id="2.40.50.140">
    <property type="entry name" value="Nucleic acid-binding proteins"/>
    <property type="match status" value="1"/>
</dbReference>
<dbReference type="Gene3D" id="4.10.950.10">
    <property type="entry name" value="Ribosomal protein L2, domain 3"/>
    <property type="match status" value="1"/>
</dbReference>
<dbReference type="HAMAP" id="MF_01320_B">
    <property type="entry name" value="Ribosomal_uL2_B"/>
    <property type="match status" value="1"/>
</dbReference>
<dbReference type="InterPro" id="IPR012340">
    <property type="entry name" value="NA-bd_OB-fold"/>
</dbReference>
<dbReference type="InterPro" id="IPR014722">
    <property type="entry name" value="Rib_uL2_dom2"/>
</dbReference>
<dbReference type="InterPro" id="IPR002171">
    <property type="entry name" value="Ribosomal_uL2"/>
</dbReference>
<dbReference type="InterPro" id="IPR005880">
    <property type="entry name" value="Ribosomal_uL2_bac/org-type"/>
</dbReference>
<dbReference type="InterPro" id="IPR022669">
    <property type="entry name" value="Ribosomal_uL2_C"/>
</dbReference>
<dbReference type="InterPro" id="IPR022671">
    <property type="entry name" value="Ribosomal_uL2_CS"/>
</dbReference>
<dbReference type="InterPro" id="IPR014726">
    <property type="entry name" value="Ribosomal_uL2_dom3"/>
</dbReference>
<dbReference type="InterPro" id="IPR022666">
    <property type="entry name" value="Ribosomal_uL2_RNA-bd_dom"/>
</dbReference>
<dbReference type="InterPro" id="IPR008991">
    <property type="entry name" value="Translation_prot_SH3-like_sf"/>
</dbReference>
<dbReference type="NCBIfam" id="TIGR01171">
    <property type="entry name" value="rplB_bact"/>
    <property type="match status" value="1"/>
</dbReference>
<dbReference type="PANTHER" id="PTHR13691:SF5">
    <property type="entry name" value="LARGE RIBOSOMAL SUBUNIT PROTEIN UL2M"/>
    <property type="match status" value="1"/>
</dbReference>
<dbReference type="PANTHER" id="PTHR13691">
    <property type="entry name" value="RIBOSOMAL PROTEIN L2"/>
    <property type="match status" value="1"/>
</dbReference>
<dbReference type="Pfam" id="PF00181">
    <property type="entry name" value="Ribosomal_L2"/>
    <property type="match status" value="1"/>
</dbReference>
<dbReference type="Pfam" id="PF03947">
    <property type="entry name" value="Ribosomal_L2_C"/>
    <property type="match status" value="1"/>
</dbReference>
<dbReference type="PIRSF" id="PIRSF002158">
    <property type="entry name" value="Ribosomal_L2"/>
    <property type="match status" value="1"/>
</dbReference>
<dbReference type="SMART" id="SM01383">
    <property type="entry name" value="Ribosomal_L2"/>
    <property type="match status" value="1"/>
</dbReference>
<dbReference type="SMART" id="SM01382">
    <property type="entry name" value="Ribosomal_L2_C"/>
    <property type="match status" value="1"/>
</dbReference>
<dbReference type="SUPFAM" id="SSF50249">
    <property type="entry name" value="Nucleic acid-binding proteins"/>
    <property type="match status" value="1"/>
</dbReference>
<dbReference type="SUPFAM" id="SSF50104">
    <property type="entry name" value="Translation proteins SH3-like domain"/>
    <property type="match status" value="1"/>
</dbReference>
<dbReference type="PROSITE" id="PS00467">
    <property type="entry name" value="RIBOSOMAL_L2"/>
    <property type="match status" value="1"/>
</dbReference>
<organism>
    <name type="scientific">Pseudomonas putida (strain W619)</name>
    <dbReference type="NCBI Taxonomy" id="390235"/>
    <lineage>
        <taxon>Bacteria</taxon>
        <taxon>Pseudomonadati</taxon>
        <taxon>Pseudomonadota</taxon>
        <taxon>Gammaproteobacteria</taxon>
        <taxon>Pseudomonadales</taxon>
        <taxon>Pseudomonadaceae</taxon>
        <taxon>Pseudomonas</taxon>
    </lineage>
</organism>
<comment type="function">
    <text evidence="1">One of the primary rRNA binding proteins. Required for association of the 30S and 50S subunits to form the 70S ribosome, for tRNA binding and peptide bond formation. It has been suggested to have peptidyltransferase activity; this is somewhat controversial. Makes several contacts with the 16S rRNA in the 70S ribosome.</text>
</comment>
<comment type="subunit">
    <text evidence="1">Part of the 50S ribosomal subunit. Forms a bridge to the 30S subunit in the 70S ribosome.</text>
</comment>
<comment type="similarity">
    <text evidence="1">Belongs to the universal ribosomal protein uL2 family.</text>
</comment>
<sequence length="274" mass="29669">MAIVKCKPTSPGRRFVVKVVNQELHKGAPHAPLLEKKSKSGGRNNNGRITTRHVGGGHKQHYRLVDFRRNDKDGIPATVERIEYDPNRTAHIALLCYADGERRYIIAPKGVSAGDQLIAGALAPIKAGNSLQLRNIPVGSTIHGIELKPGKGAQIARSAGASAQLIAREGVYVTLRLRSGEMRKVLAECRATLGEVSNSEHSLRSLGKAGAKRWRGVRPTVRGVAMNPVDHPHGGGEGRTSGGRHPVSPWGFPTKGAKTRGNKRTDNMIVRRRK</sequence>
<proteinExistence type="inferred from homology"/>
<name>RL2_PSEPW</name>
<evidence type="ECO:0000255" key="1">
    <source>
        <dbReference type="HAMAP-Rule" id="MF_01320"/>
    </source>
</evidence>
<evidence type="ECO:0000256" key="2">
    <source>
        <dbReference type="SAM" id="MobiDB-lite"/>
    </source>
</evidence>
<evidence type="ECO:0000305" key="3"/>
<reference key="1">
    <citation type="submission" date="2008-02" db="EMBL/GenBank/DDBJ databases">
        <title>Complete sequence of Pseudomonas putida W619.</title>
        <authorList>
            <person name="Copeland A."/>
            <person name="Lucas S."/>
            <person name="Lapidus A."/>
            <person name="Barry K."/>
            <person name="Detter J.C."/>
            <person name="Glavina del Rio T."/>
            <person name="Dalin E."/>
            <person name="Tice H."/>
            <person name="Pitluck S."/>
            <person name="Chain P."/>
            <person name="Malfatti S."/>
            <person name="Shin M."/>
            <person name="Vergez L."/>
            <person name="Schmutz J."/>
            <person name="Larimer F."/>
            <person name="Land M."/>
            <person name="Hauser L."/>
            <person name="Kyrpides N."/>
            <person name="Kim E."/>
            <person name="Taghavi S."/>
            <person name="Vangronsveld D."/>
            <person name="van der Lelie D."/>
            <person name="Richardson P."/>
        </authorList>
    </citation>
    <scope>NUCLEOTIDE SEQUENCE [LARGE SCALE GENOMIC DNA]</scope>
    <source>
        <strain>W619</strain>
    </source>
</reference>
<keyword id="KW-0687">Ribonucleoprotein</keyword>
<keyword id="KW-0689">Ribosomal protein</keyword>
<keyword id="KW-0694">RNA-binding</keyword>
<keyword id="KW-0699">rRNA-binding</keyword>
<accession>B1JDW1</accession>
<protein>
    <recommendedName>
        <fullName evidence="1">Large ribosomal subunit protein uL2</fullName>
    </recommendedName>
    <alternativeName>
        <fullName evidence="3">50S ribosomal protein L2</fullName>
    </alternativeName>
</protein>
<gene>
    <name evidence="1" type="primary">rplB</name>
    <name type="ordered locus">PputW619_4746</name>
</gene>